<name>S19A2_MOUSE</name>
<accession>Q9EQN9</accession>
<accession>Q8BRH5</accession>
<accession>Q8R4Y1</accession>
<gene>
    <name evidence="17 26" type="primary">Slc19a2</name>
</gene>
<organism evidence="27">
    <name type="scientific">Mus musculus</name>
    <name type="common">Mouse</name>
    <dbReference type="NCBI Taxonomy" id="10090"/>
    <lineage>
        <taxon>Eukaryota</taxon>
        <taxon>Metazoa</taxon>
        <taxon>Chordata</taxon>
        <taxon>Craniata</taxon>
        <taxon>Vertebrata</taxon>
        <taxon>Euteleostomi</taxon>
        <taxon>Mammalia</taxon>
        <taxon>Eutheria</taxon>
        <taxon>Euarchontoglires</taxon>
        <taxon>Glires</taxon>
        <taxon>Rodentia</taxon>
        <taxon>Myomorpha</taxon>
        <taxon>Muroidea</taxon>
        <taxon>Muridae</taxon>
        <taxon>Murinae</taxon>
        <taxon>Mus</taxon>
        <taxon>Mus</taxon>
    </lineage>
</organism>
<keyword id="KW-0007">Acetylation</keyword>
<keyword id="KW-0025">Alternative splicing</keyword>
<keyword id="KW-1003">Cell membrane</keyword>
<keyword id="KW-0221">Differentiation</keyword>
<keyword id="KW-0325">Glycoprotein</keyword>
<keyword id="KW-0472">Membrane</keyword>
<keyword id="KW-0597">Phosphoprotein</keyword>
<keyword id="KW-1185">Reference proteome</keyword>
<keyword id="KW-0744">Spermatogenesis</keyword>
<keyword id="KW-0812">Transmembrane</keyword>
<keyword id="KW-1133">Transmembrane helix</keyword>
<keyword id="KW-0813">Transport</keyword>
<proteinExistence type="evidence at protein level"/>
<comment type="function">
    <text evidence="5 6 7 8 9 10 12 14 15">High-affinity transporter for the intake of thiamine (PubMed:11481326, PubMed:11592824, PubMed:12031504, PubMed:12393806, PubMed:22194418, PubMed:24961373, PubMed:35724964). Essential for spermatogenesis (PubMed:14567973, PubMed:14738878). Mediates H(+)-dependent pyridoxine transport (PubMed:35512554, PubMed:35724964).</text>
</comment>
<comment type="catalytic activity">
    <reaction evidence="5 6 8 12 13 15">
        <text>thiamine(out) + H(+)(in) = thiamine(in) + H(+)(out)</text>
        <dbReference type="Rhea" id="RHEA:71271"/>
        <dbReference type="ChEBI" id="CHEBI:15378"/>
        <dbReference type="ChEBI" id="CHEBI:18385"/>
    </reaction>
</comment>
<comment type="catalytic activity">
    <molecule>Isoform 1</molecule>
    <reaction evidence="7">
        <text>thiamine(out) + H(+)(in) = thiamine(in) + H(+)(out)</text>
        <dbReference type="Rhea" id="RHEA:71271"/>
        <dbReference type="ChEBI" id="CHEBI:15378"/>
        <dbReference type="ChEBI" id="CHEBI:18385"/>
    </reaction>
</comment>
<comment type="catalytic activity">
    <molecule>Isoform 2</molecule>
    <reaction evidence="7">
        <text>thiamine(out) + H(+)(in) = thiamine(in) + H(+)(out)</text>
        <dbReference type="Rhea" id="RHEA:71271"/>
        <dbReference type="ChEBI" id="CHEBI:15378"/>
        <dbReference type="ChEBI" id="CHEBI:18385"/>
    </reaction>
</comment>
<comment type="catalytic activity">
    <reaction evidence="14 15">
        <text>pyridoxine(out) + n H(+)(out) = pyridoxine(in) + n H(+)(in)</text>
        <dbReference type="Rhea" id="RHEA:76203"/>
        <dbReference type="ChEBI" id="CHEBI:15378"/>
        <dbReference type="ChEBI" id="CHEBI:16709"/>
    </reaction>
</comment>
<comment type="biophysicochemical properties">
    <kinetics>
        <KM evidence="13">170 uM for thiamine</KM>
        <Vmax evidence="13">760.0 pmol/min/mg enzyme for thiamine uptake</Vmax>
    </kinetics>
</comment>
<comment type="subunit">
    <text evidence="1 16">Interacts with TSPAN1; this interaction increases the stability of SLC19A2 (By similarity). Interacts with TMEM63B (PubMed:39217145).</text>
</comment>
<comment type="subcellular location">
    <subcellularLocation>
        <location evidence="5 6">Cell membrane</location>
        <topology evidence="2">Multi-pass membrane protein</topology>
    </subcellularLocation>
</comment>
<comment type="alternative products">
    <event type="alternative splicing"/>
    <isoform>
        <id>Q9EQN9-1</id>
        <name>1</name>
        <sequence type="displayed"/>
    </isoform>
    <isoform>
        <id>Q9EQN9-2</id>
        <name>2</name>
        <sequence type="described" ref="VSP_059029"/>
    </isoform>
</comment>
<comment type="tissue specificity">
    <text evidence="6 10 12 13">Expressed in liver (PubMed:24961373). Expressed in cochlear hair cells and duodenum (at protein level) (PubMed:11592824). Detected in pancreatic acinar cells (at protein level) (PubMed:22194418). Also expressed strongly in pancreatic islet cells (PubMed:22194418). Expressed in the testis (PubMed:14738878).</text>
</comment>
<comment type="tissue specificity">
    <molecule>Isoform 1</molecule>
    <text evidence="4 7">Very highly expressed in liver, and also detected at lower levels in heart, testis, kidney, brain and spleen.</text>
</comment>
<comment type="tissue specificity">
    <molecule>Isoform 2</molecule>
    <text evidence="7">Expressed at low levels in liver and spleen.</text>
</comment>
<comment type="developmental stage">
    <text evidence="6">At embryonic stage 16.5 dpc detected in intestinal enterocytes, pancreatic acinar cells, and cochlear hair cells (at protein level). In newborn mice, detected in brain, kidney, liver and intestine (at protein level).</text>
</comment>
<comment type="induction">
    <text evidence="5">Induced in a TP53/p53-dependent manner upon DNA damage.</text>
</comment>
<comment type="disruption phenotype">
    <text evidence="8 9 10 11 12">Males are infertile with reduced testis size and aspermia (PubMed:14567973, PubMed:14738878). Spermatogenesis fails at the pachytene spermatid stage with apoptosis of germ cells (PubMed:14567973, PubMed:14738878). When fed on a thiamine-free diet, animals develop additional phenotypes including diabetes mellitus, profound hearing loss, and defective hematopoiesis (PubMed:12393806, PubMed:14567973, PubMed:16642288). Pancreatic morphology appears to be normal although insulin secretion is significantly impaired (PubMed:12393806). Erythroid precursors in the bone marrow are almost completely absent leading to loss of reticulocytes in the peripheral blood (PubMed:14567973). The hearing loss phenotype is specifically associated with loss of cochlear inner hair cells (PubMed:16642288). These phenotypes can be reversed in many cases by re-introduction of a high thiamine diet (PubMed:12393806, PubMed:14567973, PubMed:16642288). Thiamine uptake by pancreatic acinar cells from knockout mice was found to be significantly lower than uptake by pancreatic acinar cells of the wild-type littermates (PubMed:22194418).</text>
</comment>
<comment type="similarity">
    <text evidence="19">Belongs to the reduced folate carrier (RFC) transporter (TC 2.A.48) family.</text>
</comment>
<evidence type="ECO:0000250" key="1">
    <source>
        <dbReference type="UniProtKB" id="O60779"/>
    </source>
</evidence>
<evidence type="ECO:0000255" key="2"/>
<evidence type="ECO:0000255" key="3">
    <source>
        <dbReference type="PROSITE-ProRule" id="PRU00498"/>
    </source>
</evidence>
<evidence type="ECO:0000269" key="4">
    <source>
    </source>
</evidence>
<evidence type="ECO:0000269" key="5">
    <source>
    </source>
</evidence>
<evidence type="ECO:0000269" key="6">
    <source>
    </source>
</evidence>
<evidence type="ECO:0000269" key="7">
    <source>
    </source>
</evidence>
<evidence type="ECO:0000269" key="8">
    <source>
    </source>
</evidence>
<evidence type="ECO:0000269" key="9">
    <source>
    </source>
</evidence>
<evidence type="ECO:0000269" key="10">
    <source>
    </source>
</evidence>
<evidence type="ECO:0000269" key="11">
    <source>
    </source>
</evidence>
<evidence type="ECO:0000269" key="12">
    <source>
    </source>
</evidence>
<evidence type="ECO:0000269" key="13">
    <source>
    </source>
</evidence>
<evidence type="ECO:0000269" key="14">
    <source>
    </source>
</evidence>
<evidence type="ECO:0000269" key="15">
    <source>
    </source>
</evidence>
<evidence type="ECO:0000269" key="16">
    <source>
    </source>
</evidence>
<evidence type="ECO:0000303" key="17">
    <source>
    </source>
</evidence>
<evidence type="ECO:0000303" key="18">
    <source>
    </source>
</evidence>
<evidence type="ECO:0000305" key="19"/>
<evidence type="ECO:0000312" key="20">
    <source>
        <dbReference type="EMBL" id="AAG43424.1"/>
    </source>
</evidence>
<evidence type="ECO:0000312" key="21">
    <source>
        <dbReference type="EMBL" id="AAH34659.1"/>
    </source>
</evidence>
<evidence type="ECO:0000312" key="22">
    <source>
        <dbReference type="EMBL" id="AAK33067.1"/>
    </source>
</evidence>
<evidence type="ECO:0000312" key="23">
    <source>
        <dbReference type="EMBL" id="AAL30451.1"/>
    </source>
</evidence>
<evidence type="ECO:0000312" key="24">
    <source>
        <dbReference type="EMBL" id="BAC32108.1"/>
    </source>
</evidence>
<evidence type="ECO:0000312" key="25">
    <source>
        <dbReference type="EMBL" id="EDL39259.1"/>
    </source>
</evidence>
<evidence type="ECO:0000312" key="26">
    <source>
        <dbReference type="MGI" id="MGI:1928761"/>
    </source>
</evidence>
<evidence type="ECO:0000312" key="27">
    <source>
        <dbReference type="Proteomes" id="UP000000589"/>
    </source>
</evidence>
<feature type="chain" id="PRO_0000441105" description="Thiamine transporter 1">
    <location>
        <begin position="1"/>
        <end position="498"/>
    </location>
</feature>
<feature type="topological domain" description="Cytoplasmic" evidence="19">
    <location>
        <begin position="1"/>
        <end position="28"/>
    </location>
</feature>
<feature type="transmembrane region" description="Helical" evidence="2">
    <location>
        <begin position="29"/>
        <end position="46"/>
    </location>
</feature>
<feature type="topological domain" description="Extracellular" evidence="19">
    <location>
        <begin position="47"/>
        <end position="71"/>
    </location>
</feature>
<feature type="transmembrane region" description="Helical" evidence="2">
    <location>
        <begin position="72"/>
        <end position="92"/>
    </location>
</feature>
<feature type="topological domain" description="Cytoplasmic" evidence="19">
    <location>
        <begin position="93"/>
        <end position="105"/>
    </location>
</feature>
<feature type="transmembrane region" description="Helical" evidence="2">
    <location>
        <begin position="106"/>
        <end position="126"/>
    </location>
</feature>
<feature type="topological domain" description="Extracellular" evidence="19">
    <location>
        <begin position="127"/>
        <end position="128"/>
    </location>
</feature>
<feature type="transmembrane region" description="Helical" evidence="2">
    <location>
        <begin position="129"/>
        <end position="149"/>
    </location>
</feature>
<feature type="topological domain" description="Cytoplasmic" evidence="19">
    <location>
        <begin position="150"/>
        <end position="164"/>
    </location>
</feature>
<feature type="transmembrane region" description="Helical" evidence="2">
    <location>
        <begin position="165"/>
        <end position="185"/>
    </location>
</feature>
<feature type="topological domain" description="Extracellular" evidence="19">
    <location>
        <position position="186"/>
    </location>
</feature>
<feature type="transmembrane region" description="Helical" evidence="2">
    <location>
        <begin position="187"/>
        <end position="207"/>
    </location>
</feature>
<feature type="topological domain" description="Cytoplasmic" evidence="19">
    <location>
        <begin position="208"/>
        <end position="295"/>
    </location>
</feature>
<feature type="transmembrane region" description="Helical" evidence="2">
    <location>
        <begin position="296"/>
        <end position="316"/>
    </location>
</feature>
<feature type="topological domain" description="Extracellular" evidence="19">
    <location>
        <begin position="317"/>
        <end position="334"/>
    </location>
</feature>
<feature type="transmembrane region" description="Helical" evidence="2">
    <location>
        <begin position="335"/>
        <end position="355"/>
    </location>
</feature>
<feature type="topological domain" description="Cytoplasmic" evidence="19">
    <location>
        <begin position="356"/>
        <end position="360"/>
    </location>
</feature>
<feature type="transmembrane region" description="Helical" evidence="2">
    <location>
        <begin position="361"/>
        <end position="381"/>
    </location>
</feature>
<feature type="topological domain" description="Extracellular" evidence="19">
    <location>
        <begin position="382"/>
        <end position="386"/>
    </location>
</feature>
<feature type="transmembrane region" description="Helical" evidence="2">
    <location>
        <begin position="387"/>
        <end position="407"/>
    </location>
</feature>
<feature type="topological domain" description="Cytoplasmic" evidence="19">
    <location>
        <begin position="408"/>
        <end position="423"/>
    </location>
</feature>
<feature type="transmembrane region" description="Helical" evidence="2">
    <location>
        <begin position="424"/>
        <end position="444"/>
    </location>
</feature>
<feature type="topological domain" description="Extracellular" evidence="19">
    <location>
        <begin position="445"/>
        <end position="456"/>
    </location>
</feature>
<feature type="transmembrane region" description="Helical" evidence="2">
    <location>
        <begin position="457"/>
        <end position="477"/>
    </location>
</feature>
<feature type="topological domain" description="Cytoplasmic" evidence="19">
    <location>
        <begin position="478"/>
        <end position="498"/>
    </location>
</feature>
<feature type="site" description="Essential for pyridoxine transport" evidence="1">
    <location>
        <position position="104"/>
    </location>
</feature>
<feature type="site" description="Essential for pyridoxine transport" evidence="1">
    <location>
        <position position="105"/>
    </location>
</feature>
<feature type="site" description="Essential for pyridoxine transport" evidence="1">
    <location>
        <position position="109"/>
    </location>
</feature>
<feature type="site" description="Essential for pyridoxine transport" evidence="1">
    <location>
        <position position="111"/>
    </location>
</feature>
<feature type="site" description="Essential for pyridoxine transport" evidence="1">
    <location>
        <position position="112"/>
    </location>
</feature>
<feature type="site" description="Essential for pyridoxine transport" evidence="1">
    <location>
        <position position="186"/>
    </location>
</feature>
<feature type="site" description="Essential for pyridoxine transport" evidence="1">
    <location>
        <position position="191"/>
    </location>
</feature>
<feature type="modified residue" description="N-acetylmethionine" evidence="1">
    <location>
        <position position="1"/>
    </location>
</feature>
<feature type="modified residue" description="Phosphoserine" evidence="1">
    <location>
        <position position="222"/>
    </location>
</feature>
<feature type="glycosylation site" description="N-linked (GlcNAc...) asparagine" evidence="3">
    <location>
        <position position="63"/>
    </location>
</feature>
<feature type="splice variant" id="VSP_059029" description="In isoform 2." evidence="19">
    <location>
        <begin position="232"/>
        <end position="269"/>
    </location>
</feature>
<feature type="sequence conflict" description="In Ref. 5; BAC32108." evidence="19" ref="5">
    <original>Y</original>
    <variation>C</variation>
    <location>
        <position position="394"/>
    </location>
</feature>
<reference evidence="20" key="1">
    <citation type="journal article" date="2001" name="J. Biol. Chem.">
        <title>Identification of a mouse thiamine transporter gene as a direct transcriptional target for p53.</title>
        <authorList>
            <person name="Lo P.K."/>
            <person name="Chen J.Y."/>
            <person name="Tang P.P."/>
            <person name="Lin J."/>
            <person name="Lin C.H."/>
            <person name="Su L.T."/>
            <person name="Wu C.H."/>
            <person name="Chen T.L."/>
            <person name="Yang Y."/>
            <person name="Wang F.F."/>
        </authorList>
    </citation>
    <scope>NUCLEOTIDE SEQUENCE [GENOMIC DNA]</scope>
    <scope>NUCLEOTIDE SEQUENCE [MRNA] (ISOFORM 1)</scope>
    <scope>FUNCTION</scope>
    <scope>SUBCELLULAR LOCATION</scope>
    <scope>TRANSPORTER ACTIVITY</scope>
    <scope>INDUCTION</scope>
</reference>
<reference evidence="23" key="2">
    <citation type="journal article" date="2001" name="Mol. Genet. Metab.">
        <title>Slc19a2: cloning and characterization of the murine thiamin transporter cDNA and genomic sequence, the orthologue of the human TRMA gene.</title>
        <authorList>
            <person name="Oishi K."/>
            <person name="Hirai T."/>
            <person name="Gelb B.D."/>
            <person name="Diaz G.A."/>
        </authorList>
    </citation>
    <scope>NUCLEOTIDE SEQUENCE [MRNA] (ISOFORM 1)</scope>
    <scope>TISSUE SPECIFICITY</scope>
    <source>
        <strain evidence="23">BALB/cJ</strain>
    </source>
</reference>
<reference evidence="22" key="3">
    <citation type="journal article" date="2001" name="Mol. Genet. Metab.">
        <title>Characterization of a murine high-affinity thiamine transporter, Slc19a2.</title>
        <authorList>
            <person name="Fleming J.C."/>
            <person name="Steinkamp M.P."/>
            <person name="Kawatsuji R."/>
            <person name="Tartaglini E."/>
            <person name="Pinkus J.L."/>
            <person name="Pinkus G.S."/>
            <person name="Fleming M.D."/>
            <person name="Neufeld E.J."/>
        </authorList>
    </citation>
    <scope>NUCLEOTIDE SEQUENCE [MRNA] (ISOFORMS 1 AND 2)</scope>
    <scope>FUNCTION</scope>
    <scope>SUBCELLULAR LOCATION</scope>
    <scope>TISSUE SPECIFICITY</scope>
    <scope>DEVELOPMENTAL STAGE</scope>
    <scope>TRANSPORTER ACTIVITY</scope>
</reference>
<reference evidence="20" key="4">
    <citation type="journal article" date="2002" name="Biochim. Biophys. Acta">
        <title>Identification of transcriptional start sites and splicing of mouse thiamine transporter gene THTR-1 (Slc19a2).</title>
        <authorList>
            <person name="Lo P.K."/>
            <person name="Wang F.F."/>
        </authorList>
    </citation>
    <scope>NUCLEOTIDE SEQUENCE [MRNA] (ISOFORM 2)</scope>
    <scope>FUNCTION (ISOFORMS 1 AND 2)</scope>
    <scope>TRANSPORTER ACTIVITY (ISOFORMS 1 AND 2)</scope>
    <scope>TISSUE SPECIFICITY (ISOFORMS 1 AND 2)</scope>
</reference>
<reference evidence="24" key="5">
    <citation type="journal article" date="2005" name="Science">
        <title>The transcriptional landscape of the mammalian genome.</title>
        <authorList>
            <person name="Carninci P."/>
            <person name="Kasukawa T."/>
            <person name="Katayama S."/>
            <person name="Gough J."/>
            <person name="Frith M.C."/>
            <person name="Maeda N."/>
            <person name="Oyama R."/>
            <person name="Ravasi T."/>
            <person name="Lenhard B."/>
            <person name="Wells C."/>
            <person name="Kodzius R."/>
            <person name="Shimokawa K."/>
            <person name="Bajic V.B."/>
            <person name="Brenner S.E."/>
            <person name="Batalov S."/>
            <person name="Forrest A.R."/>
            <person name="Zavolan M."/>
            <person name="Davis M.J."/>
            <person name="Wilming L.G."/>
            <person name="Aidinis V."/>
            <person name="Allen J.E."/>
            <person name="Ambesi-Impiombato A."/>
            <person name="Apweiler R."/>
            <person name="Aturaliya R.N."/>
            <person name="Bailey T.L."/>
            <person name="Bansal M."/>
            <person name="Baxter L."/>
            <person name="Beisel K.W."/>
            <person name="Bersano T."/>
            <person name="Bono H."/>
            <person name="Chalk A.M."/>
            <person name="Chiu K.P."/>
            <person name="Choudhary V."/>
            <person name="Christoffels A."/>
            <person name="Clutterbuck D.R."/>
            <person name="Crowe M.L."/>
            <person name="Dalla E."/>
            <person name="Dalrymple B.P."/>
            <person name="de Bono B."/>
            <person name="Della Gatta G."/>
            <person name="di Bernardo D."/>
            <person name="Down T."/>
            <person name="Engstrom P."/>
            <person name="Fagiolini M."/>
            <person name="Faulkner G."/>
            <person name="Fletcher C.F."/>
            <person name="Fukushima T."/>
            <person name="Furuno M."/>
            <person name="Futaki S."/>
            <person name="Gariboldi M."/>
            <person name="Georgii-Hemming P."/>
            <person name="Gingeras T.R."/>
            <person name="Gojobori T."/>
            <person name="Green R.E."/>
            <person name="Gustincich S."/>
            <person name="Harbers M."/>
            <person name="Hayashi Y."/>
            <person name="Hensch T.K."/>
            <person name="Hirokawa N."/>
            <person name="Hill D."/>
            <person name="Huminiecki L."/>
            <person name="Iacono M."/>
            <person name="Ikeo K."/>
            <person name="Iwama A."/>
            <person name="Ishikawa T."/>
            <person name="Jakt M."/>
            <person name="Kanapin A."/>
            <person name="Katoh M."/>
            <person name="Kawasawa Y."/>
            <person name="Kelso J."/>
            <person name="Kitamura H."/>
            <person name="Kitano H."/>
            <person name="Kollias G."/>
            <person name="Krishnan S.P."/>
            <person name="Kruger A."/>
            <person name="Kummerfeld S.K."/>
            <person name="Kurochkin I.V."/>
            <person name="Lareau L.F."/>
            <person name="Lazarevic D."/>
            <person name="Lipovich L."/>
            <person name="Liu J."/>
            <person name="Liuni S."/>
            <person name="McWilliam S."/>
            <person name="Madan Babu M."/>
            <person name="Madera M."/>
            <person name="Marchionni L."/>
            <person name="Matsuda H."/>
            <person name="Matsuzawa S."/>
            <person name="Miki H."/>
            <person name="Mignone F."/>
            <person name="Miyake S."/>
            <person name="Morris K."/>
            <person name="Mottagui-Tabar S."/>
            <person name="Mulder N."/>
            <person name="Nakano N."/>
            <person name="Nakauchi H."/>
            <person name="Ng P."/>
            <person name="Nilsson R."/>
            <person name="Nishiguchi S."/>
            <person name="Nishikawa S."/>
            <person name="Nori F."/>
            <person name="Ohara O."/>
            <person name="Okazaki Y."/>
            <person name="Orlando V."/>
            <person name="Pang K.C."/>
            <person name="Pavan W.J."/>
            <person name="Pavesi G."/>
            <person name="Pesole G."/>
            <person name="Petrovsky N."/>
            <person name="Piazza S."/>
            <person name="Reed J."/>
            <person name="Reid J.F."/>
            <person name="Ring B.Z."/>
            <person name="Ringwald M."/>
            <person name="Rost B."/>
            <person name="Ruan Y."/>
            <person name="Salzberg S.L."/>
            <person name="Sandelin A."/>
            <person name="Schneider C."/>
            <person name="Schoenbach C."/>
            <person name="Sekiguchi K."/>
            <person name="Semple C.A."/>
            <person name="Seno S."/>
            <person name="Sessa L."/>
            <person name="Sheng Y."/>
            <person name="Shibata Y."/>
            <person name="Shimada H."/>
            <person name="Shimada K."/>
            <person name="Silva D."/>
            <person name="Sinclair B."/>
            <person name="Sperling S."/>
            <person name="Stupka E."/>
            <person name="Sugiura K."/>
            <person name="Sultana R."/>
            <person name="Takenaka Y."/>
            <person name="Taki K."/>
            <person name="Tammoja K."/>
            <person name="Tan S.L."/>
            <person name="Tang S."/>
            <person name="Taylor M.S."/>
            <person name="Tegner J."/>
            <person name="Teichmann S.A."/>
            <person name="Ueda H.R."/>
            <person name="van Nimwegen E."/>
            <person name="Verardo R."/>
            <person name="Wei C.L."/>
            <person name="Yagi K."/>
            <person name="Yamanishi H."/>
            <person name="Zabarovsky E."/>
            <person name="Zhu S."/>
            <person name="Zimmer A."/>
            <person name="Hide W."/>
            <person name="Bult C."/>
            <person name="Grimmond S.M."/>
            <person name="Teasdale R.D."/>
            <person name="Liu E.T."/>
            <person name="Brusic V."/>
            <person name="Quackenbush J."/>
            <person name="Wahlestedt C."/>
            <person name="Mattick J.S."/>
            <person name="Hume D.A."/>
            <person name="Kai C."/>
            <person name="Sasaki D."/>
            <person name="Tomaru Y."/>
            <person name="Fukuda S."/>
            <person name="Kanamori-Katayama M."/>
            <person name="Suzuki M."/>
            <person name="Aoki J."/>
            <person name="Arakawa T."/>
            <person name="Iida J."/>
            <person name="Imamura K."/>
            <person name="Itoh M."/>
            <person name="Kato T."/>
            <person name="Kawaji H."/>
            <person name="Kawagashira N."/>
            <person name="Kawashima T."/>
            <person name="Kojima M."/>
            <person name="Kondo S."/>
            <person name="Konno H."/>
            <person name="Nakano K."/>
            <person name="Ninomiya N."/>
            <person name="Nishio T."/>
            <person name="Okada M."/>
            <person name="Plessy C."/>
            <person name="Shibata K."/>
            <person name="Shiraki T."/>
            <person name="Suzuki S."/>
            <person name="Tagami M."/>
            <person name="Waki K."/>
            <person name="Watahiki A."/>
            <person name="Okamura-Oho Y."/>
            <person name="Suzuki H."/>
            <person name="Kawai J."/>
            <person name="Hayashizaki Y."/>
        </authorList>
    </citation>
    <scope>NUCLEOTIDE SEQUENCE [LARGE SCALE MRNA]</scope>
    <source>
        <strain evidence="24">C57BL/6J</strain>
        <tissue evidence="24">Embryo</tissue>
    </source>
</reference>
<reference evidence="27" key="6">
    <citation type="journal article" date="2009" name="PLoS Biol.">
        <title>Lineage-specific biology revealed by a finished genome assembly of the mouse.</title>
        <authorList>
            <person name="Church D.M."/>
            <person name="Goodstadt L."/>
            <person name="Hillier L.W."/>
            <person name="Zody M.C."/>
            <person name="Goldstein S."/>
            <person name="She X."/>
            <person name="Bult C.J."/>
            <person name="Agarwala R."/>
            <person name="Cherry J.L."/>
            <person name="DiCuccio M."/>
            <person name="Hlavina W."/>
            <person name="Kapustin Y."/>
            <person name="Meric P."/>
            <person name="Maglott D."/>
            <person name="Birtle Z."/>
            <person name="Marques A.C."/>
            <person name="Graves T."/>
            <person name="Zhou S."/>
            <person name="Teague B."/>
            <person name="Potamousis K."/>
            <person name="Churas C."/>
            <person name="Place M."/>
            <person name="Herschleb J."/>
            <person name="Runnheim R."/>
            <person name="Forrest D."/>
            <person name="Amos-Landgraf J."/>
            <person name="Schwartz D.C."/>
            <person name="Cheng Z."/>
            <person name="Lindblad-Toh K."/>
            <person name="Eichler E.E."/>
            <person name="Ponting C.P."/>
        </authorList>
    </citation>
    <scope>NUCLEOTIDE SEQUENCE [LARGE SCALE GENOMIC DNA]</scope>
    <source>
        <strain>C57BL/6J</strain>
    </source>
</reference>
<reference evidence="25" key="7">
    <citation type="submission" date="2005-09" db="EMBL/GenBank/DDBJ databases">
        <authorList>
            <person name="Mural R.J."/>
            <person name="Adams M.D."/>
            <person name="Myers E.W."/>
            <person name="Smith H.O."/>
            <person name="Venter J.C."/>
        </authorList>
    </citation>
    <scope>NUCLEOTIDE SEQUENCE [LARGE SCALE GENOMIC DNA]</scope>
</reference>
<reference evidence="21" key="8">
    <citation type="journal article" date="2004" name="Genome Res.">
        <title>The status, quality, and expansion of the NIH full-length cDNA project: the Mammalian Gene Collection (MGC).</title>
        <authorList>
            <consortium name="The MGC Project Team"/>
        </authorList>
    </citation>
    <scope>NUCLEOTIDE SEQUENCE [LARGE SCALE MRNA]</scope>
    <source>
        <strain evidence="21">C57BL/6J</strain>
        <tissue evidence="21">Eye</tissue>
    </source>
</reference>
<reference evidence="19" key="9">
    <citation type="journal article" date="2002" name="Hum. Mol. Genet.">
        <title>Targeted disruption of Slc19a2, the gene encoding the high-affinity thiamin transporter Thtr-1, causes diabetes mellitus, sensorineural deafness and megaloblastosis in mice.</title>
        <authorList>
            <person name="Oishi K."/>
            <person name="Hofmann S."/>
            <person name="Diaz G.A."/>
            <person name="Brown T."/>
            <person name="Manwani D."/>
            <person name="Ng L."/>
            <person name="Young R."/>
            <person name="Vlassara H."/>
            <person name="Ioannou Y.A."/>
            <person name="Forrest D."/>
            <person name="Gelb B.D."/>
        </authorList>
    </citation>
    <scope>FUNCTION</scope>
    <scope>DISRUPTION PHENOTYPE</scope>
    <scope>TRANSPORTER ACTIVITY</scope>
</reference>
<reference evidence="19" key="10">
    <citation type="journal article" date="2003" name="Mol. Genet. Metab.">
        <title>Male infertility and thiamine-dependent erythroid hypoplasia in mice lacking thiamine transporter Slc19a2.</title>
        <authorList>
            <person name="Fleming J.C."/>
            <person name="Tartaglini E."/>
            <person name="Kawatsuji R."/>
            <person name="Yao D."/>
            <person name="Fujiwara Y."/>
            <person name="Bednarski J.J."/>
            <person name="Fleming M.D."/>
            <person name="Neufeld E.J."/>
        </authorList>
    </citation>
    <scope>DISRUPTION PHENOTYPE</scope>
    <scope>FUNCTION</scope>
</reference>
<reference evidence="19" key="11">
    <citation type="journal article" date="2004" name="Dev. Biol.">
        <title>Male infertility due to germ cell apoptosis in mice lacking the thiamin carrier, Tht1. A new insight into the critical role of thiamin in spermatogenesis.</title>
        <authorList>
            <person name="Oishi K."/>
            <person name="Barchi M."/>
            <person name="Au A.C."/>
            <person name="Gelb B.D."/>
            <person name="Diaz G.A."/>
        </authorList>
    </citation>
    <scope>DISRUPTION PHENOTYPE</scope>
    <scope>FUNCTION</scope>
    <scope>TISSUE SPECIFICITY</scope>
</reference>
<reference evidence="19" key="12">
    <citation type="journal article" date="2006" name="J. Assoc. Res. Otolaryngol.">
        <title>Deletion of SLC19A2, the high affinity thiamine transporter, causes selective inner hair cell loss and an auditory neuropathy phenotype.</title>
        <authorList>
            <person name="Liberman M.C."/>
            <person name="Tartaglini E."/>
            <person name="Fleming J.C."/>
            <person name="Neufeld E.J."/>
        </authorList>
    </citation>
    <scope>DISRUPTION PHENOTYPE</scope>
</reference>
<reference evidence="19" key="13">
    <citation type="journal article" date="2012" name="Am. J. Physiol.">
        <title>Relative contribution of THTR-1 and THTR-2 in thiamin uptake by pancreatic acinar cells: studies utilizing Slc19a2 and Slc19a3 knockout mouse models.</title>
        <authorList>
            <person name="Subramanian V.S."/>
            <person name="Subramanya S.B."/>
            <person name="Said H.M."/>
        </authorList>
    </citation>
    <scope>FUNCTION</scope>
    <scope>TISSUE SPECIFICITY</scope>
    <scope>DISRUPTION PHENOTYPE</scope>
    <scope>TRANSPORTER ACTIVITY</scope>
</reference>
<reference key="14">
    <citation type="journal article" date="2014" name="Proc. Natl. Acad. Sci. U.S.A.">
        <title>OCT1 is a high-capacity thiamine transporter that regulates hepatic steatosis and is a target of metformin.</title>
        <authorList>
            <person name="Chen L."/>
            <person name="Shu Y."/>
            <person name="Liang X."/>
            <person name="Chen E.C."/>
            <person name="Yee S.W."/>
            <person name="Zur A.A."/>
            <person name="Li S."/>
            <person name="Xu L."/>
            <person name="Keshari K.R."/>
            <person name="Lin M.J."/>
            <person name="Chien H.C."/>
            <person name="Zhang Y."/>
            <person name="Morrissey K.M."/>
            <person name="Liu J."/>
            <person name="Ostrem J."/>
            <person name="Younger N.S."/>
            <person name="Kurhanewicz J."/>
            <person name="Shokat K.M."/>
            <person name="Ashrafi K."/>
            <person name="Giacomini K.M."/>
        </authorList>
    </citation>
    <scope>FUNCTION</scope>
    <scope>TRANSPORTER ACTIVITY</scope>
    <scope>BIOPHYSICOCHEMICAL PROPERTIES</scope>
    <scope>TISSUE SPECIFICITY</scope>
</reference>
<reference key="15">
    <citation type="journal article" date="2022" name="Drug Metab. Pharmacokinet.">
        <title>Animal species differences in the pyridoxine transport function of SLC19A3: Absence of Slc19a3-mediated pyridoxine uptake in the rat small intestine.</title>
        <authorList>
            <person name="Yamashiro T."/>
            <person name="Yasujima T."/>
            <person name="Yuasa H."/>
        </authorList>
    </citation>
    <scope>FUNCTION</scope>
    <scope>TRANSPORTER ACTIVITY</scope>
</reference>
<reference key="16">
    <citation type="journal article" date="2022" name="J. Biol. Chem.">
        <title>Identification of the amino acid residues involved in the species-dependent differences in the pyridoxine transport function of SLC19A3.</title>
        <authorList>
            <person name="Miyake K."/>
            <person name="Yasujima T."/>
            <person name="Takahashi S."/>
            <person name="Yamashiro T."/>
            <person name="Yuasa H."/>
        </authorList>
    </citation>
    <scope>FUNCTION</scope>
    <scope>TRANSPORTER ACTIVITY</scope>
</reference>
<reference key="17">
    <citation type="journal article" date="2024" name="Nat. Commun.">
        <title>Phospholipid scrambling induced by an ion channel/metabolite transporter complex.</title>
        <authorList>
            <person name="Niu H."/>
            <person name="Maruoka M."/>
            <person name="Noguchi Y."/>
            <person name="Kosako H."/>
            <person name="Suzuki J."/>
        </authorList>
    </citation>
    <scope>INTERACTION WITH TMEM63B</scope>
</reference>
<protein>
    <recommendedName>
        <fullName evidence="18">Thiamine transporter 1</fullName>
        <shortName evidence="18">ThTr-1</shortName>
    </recommendedName>
    <alternativeName>
        <fullName evidence="19">Solute carrier family 19 member 2</fullName>
    </alternativeName>
</protein>
<dbReference type="EMBL" id="AF224341">
    <property type="protein sequence ID" value="AAL11497.1"/>
    <property type="molecule type" value="Genomic_DNA"/>
</dbReference>
<dbReference type="EMBL" id="AF179403">
    <property type="protein sequence ID" value="AAG43424.1"/>
    <property type="molecule type" value="mRNA"/>
</dbReference>
<dbReference type="EMBL" id="AF360396">
    <property type="protein sequence ID" value="AAL30451.1"/>
    <property type="molecule type" value="mRNA"/>
</dbReference>
<dbReference type="EMBL" id="AF216204">
    <property type="protein sequence ID" value="AAK33067.1"/>
    <property type="molecule type" value="mRNA"/>
</dbReference>
<dbReference type="EMBL" id="AF326916">
    <property type="protein sequence ID" value="AAL85635.1"/>
    <property type="molecule type" value="mRNA"/>
</dbReference>
<dbReference type="EMBL" id="AF418986">
    <property type="protein sequence ID" value="AAM47550.1"/>
    <property type="molecule type" value="mRNA"/>
</dbReference>
<dbReference type="EMBL" id="AK044825">
    <property type="protein sequence ID" value="BAC32108.1"/>
    <property type="molecule type" value="mRNA"/>
</dbReference>
<dbReference type="EMBL" id="AC105161">
    <property type="status" value="NOT_ANNOTATED_CDS"/>
    <property type="molecule type" value="Genomic_DNA"/>
</dbReference>
<dbReference type="EMBL" id="CH466520">
    <property type="protein sequence ID" value="EDL39259.1"/>
    <property type="molecule type" value="Genomic_DNA"/>
</dbReference>
<dbReference type="EMBL" id="BC034659">
    <property type="protein sequence ID" value="AAH34659.1"/>
    <property type="molecule type" value="mRNA"/>
</dbReference>
<dbReference type="CCDS" id="CCDS15433.1">
    <molecule id="Q9EQN9-1"/>
</dbReference>
<dbReference type="CCDS" id="CCDS69968.1">
    <molecule id="Q9EQN9-2"/>
</dbReference>
<dbReference type="RefSeq" id="NP_001263384.1">
    <molecule id="Q9EQN9-2"/>
    <property type="nucleotide sequence ID" value="NM_001276455.1"/>
</dbReference>
<dbReference type="RefSeq" id="NP_473428.1">
    <molecule id="Q9EQN9-1"/>
    <property type="nucleotide sequence ID" value="NM_054087.3"/>
</dbReference>
<dbReference type="SMR" id="Q9EQN9"/>
<dbReference type="FunCoup" id="Q9EQN9">
    <property type="interactions" value="669"/>
</dbReference>
<dbReference type="STRING" id="10090.ENSMUSP00000037561"/>
<dbReference type="GlyCosmos" id="Q9EQN9">
    <property type="glycosylation" value="1 site, No reported glycans"/>
</dbReference>
<dbReference type="GlyGen" id="Q9EQN9">
    <property type="glycosylation" value="1 site"/>
</dbReference>
<dbReference type="iPTMnet" id="Q9EQN9"/>
<dbReference type="PhosphoSitePlus" id="Q9EQN9"/>
<dbReference type="PaxDb" id="10090-ENSMUSP00000037561"/>
<dbReference type="ProteomicsDB" id="256815">
    <molecule id="Q9EQN9-1"/>
</dbReference>
<dbReference type="ProteomicsDB" id="256816">
    <molecule id="Q9EQN9-2"/>
</dbReference>
<dbReference type="Antibodypedia" id="1655">
    <property type="antibodies" value="95 antibodies from 20 providers"/>
</dbReference>
<dbReference type="DNASU" id="116914"/>
<dbReference type="Ensembl" id="ENSMUST00000044021.12">
    <molecule id="Q9EQN9-1"/>
    <property type="protein sequence ID" value="ENSMUSP00000037561.6"/>
    <property type="gene ID" value="ENSMUSG00000040918.13"/>
</dbReference>
<dbReference type="Ensembl" id="ENSMUST00000159230.8">
    <molecule id="Q9EQN9-2"/>
    <property type="protein sequence ID" value="ENSMUSP00000123870.2"/>
    <property type="gene ID" value="ENSMUSG00000040918.13"/>
</dbReference>
<dbReference type="GeneID" id="116914"/>
<dbReference type="KEGG" id="mmu:116914"/>
<dbReference type="UCSC" id="uc007did.2">
    <molecule id="Q9EQN9-1"/>
    <property type="organism name" value="mouse"/>
</dbReference>
<dbReference type="UCSC" id="uc007die.2">
    <property type="organism name" value="mouse"/>
</dbReference>
<dbReference type="AGR" id="MGI:1928761"/>
<dbReference type="CTD" id="10560"/>
<dbReference type="MGI" id="MGI:1928761">
    <property type="gene designation" value="Slc19a2"/>
</dbReference>
<dbReference type="VEuPathDB" id="HostDB:ENSMUSG00000040918"/>
<dbReference type="eggNOG" id="KOG3810">
    <property type="taxonomic scope" value="Eukaryota"/>
</dbReference>
<dbReference type="GeneTree" id="ENSGT00950000183022"/>
<dbReference type="InParanoid" id="Q9EQN9"/>
<dbReference type="OMA" id="CYRCRPL"/>
<dbReference type="OrthoDB" id="18814at2759"/>
<dbReference type="PhylomeDB" id="Q9EQN9"/>
<dbReference type="TreeFam" id="TF313684"/>
<dbReference type="Reactome" id="R-MMU-196819">
    <property type="pathway name" value="Vitamin B1 (thiamin) metabolism"/>
</dbReference>
<dbReference type="SABIO-RK" id="Q9EQN9"/>
<dbReference type="BioGRID-ORCS" id="116914">
    <property type="hits" value="4 hits in 80 CRISPR screens"/>
</dbReference>
<dbReference type="ChiTaRS" id="Slc19a2">
    <property type="organism name" value="mouse"/>
</dbReference>
<dbReference type="PRO" id="PR:Q9EQN9"/>
<dbReference type="Proteomes" id="UP000000589">
    <property type="component" value="Chromosome 1"/>
</dbReference>
<dbReference type="RNAct" id="Q9EQN9">
    <property type="molecule type" value="protein"/>
</dbReference>
<dbReference type="Bgee" id="ENSMUSG00000040918">
    <property type="expression patterns" value="Expressed in pigmented layer of retina and 230 other cell types or tissues"/>
</dbReference>
<dbReference type="ExpressionAtlas" id="Q9EQN9">
    <property type="expression patterns" value="baseline and differential"/>
</dbReference>
<dbReference type="GO" id="GO:0005886">
    <property type="term" value="C:plasma membrane"/>
    <property type="evidence" value="ECO:0000314"/>
    <property type="project" value="MGI"/>
</dbReference>
<dbReference type="GO" id="GO:0015234">
    <property type="term" value="F:thiamine transmembrane transporter activity"/>
    <property type="evidence" value="ECO:0000314"/>
    <property type="project" value="UniProtKB"/>
</dbReference>
<dbReference type="GO" id="GO:0030154">
    <property type="term" value="P:cell differentiation"/>
    <property type="evidence" value="ECO:0007669"/>
    <property type="project" value="UniProtKB-KW"/>
</dbReference>
<dbReference type="GO" id="GO:0031923">
    <property type="term" value="P:pyridoxine transport"/>
    <property type="evidence" value="ECO:0000314"/>
    <property type="project" value="UniProtKB"/>
</dbReference>
<dbReference type="GO" id="GO:0007283">
    <property type="term" value="P:spermatogenesis"/>
    <property type="evidence" value="ECO:0000315"/>
    <property type="project" value="UniProtKB"/>
</dbReference>
<dbReference type="GO" id="GO:0009229">
    <property type="term" value="P:thiamine diphosphate biosynthetic process"/>
    <property type="evidence" value="ECO:0000314"/>
    <property type="project" value="MGI"/>
</dbReference>
<dbReference type="GO" id="GO:0071934">
    <property type="term" value="P:thiamine transmembrane transport"/>
    <property type="evidence" value="ECO:0000314"/>
    <property type="project" value="UniProtKB"/>
</dbReference>
<dbReference type="GO" id="GO:0015888">
    <property type="term" value="P:thiamine transport"/>
    <property type="evidence" value="ECO:0000314"/>
    <property type="project" value="UniProtKB"/>
</dbReference>
<dbReference type="Gene3D" id="1.20.1250.20">
    <property type="entry name" value="MFS general substrate transporter like domains"/>
    <property type="match status" value="1"/>
</dbReference>
<dbReference type="InterPro" id="IPR002666">
    <property type="entry name" value="Folate_carrier"/>
</dbReference>
<dbReference type="InterPro" id="IPR036259">
    <property type="entry name" value="MFS_trans_sf"/>
</dbReference>
<dbReference type="InterPro" id="IPR028338">
    <property type="entry name" value="ThTr-1"/>
</dbReference>
<dbReference type="PANTHER" id="PTHR10686">
    <property type="entry name" value="FOLATE TRANSPORTER"/>
    <property type="match status" value="1"/>
</dbReference>
<dbReference type="PANTHER" id="PTHR10686:SF19">
    <property type="entry name" value="THIAMINE TRANSPORTER 1"/>
    <property type="match status" value="1"/>
</dbReference>
<dbReference type="Pfam" id="PF01770">
    <property type="entry name" value="Folate_carrier"/>
    <property type="match status" value="1"/>
</dbReference>
<dbReference type="PIRSF" id="PIRSF028739">
    <property type="entry name" value="Folate_carrier"/>
    <property type="match status" value="1"/>
</dbReference>
<dbReference type="PIRSF" id="PIRSF500794">
    <property type="entry name" value="Thiamine_transporter_1"/>
    <property type="match status" value="1"/>
</dbReference>
<dbReference type="SUPFAM" id="SSF103473">
    <property type="entry name" value="MFS general substrate transporter"/>
    <property type="match status" value="1"/>
</dbReference>
<sequence>MDVPARVSRRAAAAAARMLLRTARVPRECWFLPTALLCAYGFFANLRPSEPFLTPYLLGPDKNLTERQVYNEIYPVWTYSYLLLLFPVFLATDYLRYKPVILLQGLSLIVTWFMLLYAQGLLAIQFLEFFYGIATATEIAYYSYIYTVVDLGMYQKVTSYCRSATLVGFTVGSVLGQILVSVVGWSLFSLNVISLTCVSVAFAVAWFLPMPQKSLFFHHIPSSCHGVNGLKVQNGGIVTDTPAANHLPGWEDIESKIPLNLDEPPVEEPEEPKPDRLRVFRVLWNDFLMCYSSRPLLCWSVWWALSTCGYFQVVNYAQGLWEKVMPSQNADIYNGGVEAVSTLLGASAVFAVGYIKLSWSTWGEMTLFLCSLLIAAAVYVMDTVQSIWVCYASYVVFRIIYMVLITIATFQIAANLSMERYALVFGVNTFIALALQTLLTLIVVDARGLGLCITTQFLIYASYFAAISVVFLANGIVSIIKKCRKQEDPSSSPQASTS</sequence>